<evidence type="ECO:0000255" key="1">
    <source>
        <dbReference type="HAMAP-Rule" id="MF_00108"/>
    </source>
</evidence>
<keyword id="KW-0414">Isoprene biosynthesis</keyword>
<keyword id="KW-0548">Nucleotidyltransferase</keyword>
<keyword id="KW-0808">Transferase</keyword>
<accession>B0TK06</accession>
<proteinExistence type="inferred from homology"/>
<feature type="chain" id="PRO_1000075943" description="2-C-methyl-D-erythritol 4-phosphate cytidylyltransferase">
    <location>
        <begin position="1"/>
        <end position="230"/>
    </location>
</feature>
<feature type="site" description="Transition state stabilizer" evidence="1">
    <location>
        <position position="20"/>
    </location>
</feature>
<feature type="site" description="Transition state stabilizer" evidence="1">
    <location>
        <position position="27"/>
    </location>
</feature>
<feature type="site" description="Positions MEP for the nucleophilic attack" evidence="1">
    <location>
        <position position="156"/>
    </location>
</feature>
<feature type="site" description="Positions MEP for the nucleophilic attack" evidence="1">
    <location>
        <position position="212"/>
    </location>
</feature>
<dbReference type="EC" id="2.7.7.60" evidence="1"/>
<dbReference type="EMBL" id="CP000931">
    <property type="protein sequence ID" value="ABZ75793.1"/>
    <property type="molecule type" value="Genomic_DNA"/>
</dbReference>
<dbReference type="RefSeq" id="WP_012276335.1">
    <property type="nucleotide sequence ID" value="NC_010334.1"/>
</dbReference>
<dbReference type="SMR" id="B0TK06"/>
<dbReference type="STRING" id="458817.Shal_1224"/>
<dbReference type="KEGG" id="shl:Shal_1224"/>
<dbReference type="eggNOG" id="COG1211">
    <property type="taxonomic scope" value="Bacteria"/>
</dbReference>
<dbReference type="HOGENOM" id="CLU_061281_3_1_6"/>
<dbReference type="OrthoDB" id="9806837at2"/>
<dbReference type="UniPathway" id="UPA00056">
    <property type="reaction ID" value="UER00093"/>
</dbReference>
<dbReference type="Proteomes" id="UP000001317">
    <property type="component" value="Chromosome"/>
</dbReference>
<dbReference type="GO" id="GO:0050518">
    <property type="term" value="F:2-C-methyl-D-erythritol 4-phosphate cytidylyltransferase activity"/>
    <property type="evidence" value="ECO:0007669"/>
    <property type="project" value="UniProtKB-UniRule"/>
</dbReference>
<dbReference type="GO" id="GO:0019288">
    <property type="term" value="P:isopentenyl diphosphate biosynthetic process, methylerythritol 4-phosphate pathway"/>
    <property type="evidence" value="ECO:0007669"/>
    <property type="project" value="UniProtKB-UniRule"/>
</dbReference>
<dbReference type="CDD" id="cd02516">
    <property type="entry name" value="CDP-ME_synthetase"/>
    <property type="match status" value="1"/>
</dbReference>
<dbReference type="FunFam" id="3.90.550.10:FF:000003">
    <property type="entry name" value="2-C-methyl-D-erythritol 4-phosphate cytidylyltransferase"/>
    <property type="match status" value="1"/>
</dbReference>
<dbReference type="Gene3D" id="3.90.550.10">
    <property type="entry name" value="Spore Coat Polysaccharide Biosynthesis Protein SpsA, Chain A"/>
    <property type="match status" value="1"/>
</dbReference>
<dbReference type="HAMAP" id="MF_00108">
    <property type="entry name" value="IspD"/>
    <property type="match status" value="1"/>
</dbReference>
<dbReference type="InterPro" id="IPR001228">
    <property type="entry name" value="IspD"/>
</dbReference>
<dbReference type="InterPro" id="IPR034683">
    <property type="entry name" value="IspD/TarI"/>
</dbReference>
<dbReference type="InterPro" id="IPR050088">
    <property type="entry name" value="IspD/TarI_cytidylyltransf_bact"/>
</dbReference>
<dbReference type="InterPro" id="IPR029044">
    <property type="entry name" value="Nucleotide-diphossugar_trans"/>
</dbReference>
<dbReference type="NCBIfam" id="TIGR00453">
    <property type="entry name" value="ispD"/>
    <property type="match status" value="1"/>
</dbReference>
<dbReference type="PANTHER" id="PTHR32125">
    <property type="entry name" value="2-C-METHYL-D-ERYTHRITOL 4-PHOSPHATE CYTIDYLYLTRANSFERASE, CHLOROPLASTIC"/>
    <property type="match status" value="1"/>
</dbReference>
<dbReference type="PANTHER" id="PTHR32125:SF4">
    <property type="entry name" value="2-C-METHYL-D-ERYTHRITOL 4-PHOSPHATE CYTIDYLYLTRANSFERASE, CHLOROPLASTIC"/>
    <property type="match status" value="1"/>
</dbReference>
<dbReference type="Pfam" id="PF01128">
    <property type="entry name" value="IspD"/>
    <property type="match status" value="1"/>
</dbReference>
<dbReference type="SUPFAM" id="SSF53448">
    <property type="entry name" value="Nucleotide-diphospho-sugar transferases"/>
    <property type="match status" value="1"/>
</dbReference>
<organism>
    <name type="scientific">Shewanella halifaxensis (strain HAW-EB4)</name>
    <dbReference type="NCBI Taxonomy" id="458817"/>
    <lineage>
        <taxon>Bacteria</taxon>
        <taxon>Pseudomonadati</taxon>
        <taxon>Pseudomonadota</taxon>
        <taxon>Gammaproteobacteria</taxon>
        <taxon>Alteromonadales</taxon>
        <taxon>Shewanellaceae</taxon>
        <taxon>Shewanella</taxon>
    </lineage>
</organism>
<protein>
    <recommendedName>
        <fullName evidence="1">2-C-methyl-D-erythritol 4-phosphate cytidylyltransferase</fullName>
        <ecNumber evidence="1">2.7.7.60</ecNumber>
    </recommendedName>
    <alternativeName>
        <fullName evidence="1">4-diphosphocytidyl-2C-methyl-D-erythritol synthase</fullName>
    </alternativeName>
    <alternativeName>
        <fullName evidence="1">MEP cytidylyltransferase</fullName>
        <shortName evidence="1">MCT</shortName>
    </alternativeName>
</protein>
<gene>
    <name evidence="1" type="primary">ispD</name>
    <name type="ordered locus">Shal_1224</name>
</gene>
<comment type="function">
    <text evidence="1">Catalyzes the formation of 4-diphosphocytidyl-2-C-methyl-D-erythritol from CTP and 2-C-methyl-D-erythritol 4-phosphate (MEP).</text>
</comment>
<comment type="catalytic activity">
    <reaction evidence="1">
        <text>2-C-methyl-D-erythritol 4-phosphate + CTP + H(+) = 4-CDP-2-C-methyl-D-erythritol + diphosphate</text>
        <dbReference type="Rhea" id="RHEA:13429"/>
        <dbReference type="ChEBI" id="CHEBI:15378"/>
        <dbReference type="ChEBI" id="CHEBI:33019"/>
        <dbReference type="ChEBI" id="CHEBI:37563"/>
        <dbReference type="ChEBI" id="CHEBI:57823"/>
        <dbReference type="ChEBI" id="CHEBI:58262"/>
        <dbReference type="EC" id="2.7.7.60"/>
    </reaction>
</comment>
<comment type="pathway">
    <text evidence="1">Isoprenoid biosynthesis; isopentenyl diphosphate biosynthesis via DXP pathway; isopentenyl diphosphate from 1-deoxy-D-xylulose 5-phosphate: step 2/6.</text>
</comment>
<comment type="similarity">
    <text evidence="1">Belongs to the IspD/TarI cytidylyltransferase family. IspD subfamily.</text>
</comment>
<reference key="1">
    <citation type="submission" date="2008-01" db="EMBL/GenBank/DDBJ databases">
        <title>Complete sequence of Shewanella halifaxensis HAW-EB4.</title>
        <authorList>
            <consortium name="US DOE Joint Genome Institute"/>
            <person name="Copeland A."/>
            <person name="Lucas S."/>
            <person name="Lapidus A."/>
            <person name="Glavina del Rio T."/>
            <person name="Dalin E."/>
            <person name="Tice H."/>
            <person name="Bruce D."/>
            <person name="Goodwin L."/>
            <person name="Pitluck S."/>
            <person name="Sims D."/>
            <person name="Brettin T."/>
            <person name="Detter J.C."/>
            <person name="Han C."/>
            <person name="Kuske C.R."/>
            <person name="Schmutz J."/>
            <person name="Larimer F."/>
            <person name="Land M."/>
            <person name="Hauser L."/>
            <person name="Kyrpides N."/>
            <person name="Kim E."/>
            <person name="Zhao J.-S."/>
            <person name="Richardson P."/>
        </authorList>
    </citation>
    <scope>NUCLEOTIDE SEQUENCE [LARGE SCALE GENOMIC DNA]</scope>
    <source>
        <strain>HAW-EB4</strain>
    </source>
</reference>
<name>ISPD_SHEHH</name>
<sequence length="230" mass="24860">MSQTPEQIIAIVPAAGIGSRMGAEIPKQYLQLNEQSILSHTLDCLLSHPDIDKVIVALNPADNYFAKLPQVKHPKLECVIGGKERADSVLSGLKIAEAGAWALVHDAARPCLTHRDIDKLIASVNEFPQGAILAAPVRDTMKRTDEKGLISETVCRERLWHALTPQYFPVSSLMQNLTDALAAGALITDEASAMEWAGVMPGIVSGRADNIKVTHPDDLQLASLFLKNAV</sequence>